<sequence>MSKNTKYVFVTGGVVSSLGKGITAASLGRLLKNRGLSVSIQKFDPYLNIDPGTMSPYQHGEVFVTDDGAETDLDLGHYERFIDENLTQNSNVTSGRVYWSVISKERKGEYLGGTVQVIPHITNAIKDRVHRVGKERDVDVVITEIGGTIGDIESLPFLEAIRQIKYDVGKENVCFIHVTLVPYLGKAGELKTKPTQHSVKELRSIGIQPDIIVCRSEKELSEDIKKKIGLFCNIDASEVIQNLDAEHLYAVPLMLHKEGLDRLVCEKLGLGCRDIDNAEWIDMVHRITHLTHTTKIALVGKYVELHDAYISVVEALNHGGLSNDTNVEIEWINAEDVTKENVDELLSGVDGVLVPGGFGDRGVEGKIEAIRWARENKKPFLGICLGMQCAVIEYARNVLGLEGAHSSELNPETPFPVIDLMPEQKDVEDLGGTMRLGLYPCKLEDNTFCKDVYASDLIYERHRHRYEFNNEYRTQLIESGLTIAGTSPDGRLVECVEVKDHPWFVAVQYHPELKSRPNRPHPLFVGFVGAALNNK</sequence>
<keyword id="KW-0067">ATP-binding</keyword>
<keyword id="KW-0315">Glutamine amidotransferase</keyword>
<keyword id="KW-0436">Ligase</keyword>
<keyword id="KW-0460">Magnesium</keyword>
<keyword id="KW-0479">Metal-binding</keyword>
<keyword id="KW-0547">Nucleotide-binding</keyword>
<keyword id="KW-0665">Pyrimidine biosynthesis</keyword>
<gene>
    <name evidence="1" type="primary">pyrG</name>
    <name type="ordered locus">CPF_2472</name>
</gene>
<evidence type="ECO:0000255" key="1">
    <source>
        <dbReference type="HAMAP-Rule" id="MF_01227"/>
    </source>
</evidence>
<comment type="function">
    <text evidence="1">Catalyzes the ATP-dependent amination of UTP to CTP with either L-glutamine or ammonia as the source of nitrogen. Regulates intracellular CTP levels through interactions with the four ribonucleotide triphosphates.</text>
</comment>
<comment type="catalytic activity">
    <reaction evidence="1">
        <text>UTP + L-glutamine + ATP + H2O = CTP + L-glutamate + ADP + phosphate + 2 H(+)</text>
        <dbReference type="Rhea" id="RHEA:26426"/>
        <dbReference type="ChEBI" id="CHEBI:15377"/>
        <dbReference type="ChEBI" id="CHEBI:15378"/>
        <dbReference type="ChEBI" id="CHEBI:29985"/>
        <dbReference type="ChEBI" id="CHEBI:30616"/>
        <dbReference type="ChEBI" id="CHEBI:37563"/>
        <dbReference type="ChEBI" id="CHEBI:43474"/>
        <dbReference type="ChEBI" id="CHEBI:46398"/>
        <dbReference type="ChEBI" id="CHEBI:58359"/>
        <dbReference type="ChEBI" id="CHEBI:456216"/>
        <dbReference type="EC" id="6.3.4.2"/>
    </reaction>
</comment>
<comment type="catalytic activity">
    <reaction evidence="1">
        <text>L-glutamine + H2O = L-glutamate + NH4(+)</text>
        <dbReference type="Rhea" id="RHEA:15889"/>
        <dbReference type="ChEBI" id="CHEBI:15377"/>
        <dbReference type="ChEBI" id="CHEBI:28938"/>
        <dbReference type="ChEBI" id="CHEBI:29985"/>
        <dbReference type="ChEBI" id="CHEBI:58359"/>
    </reaction>
</comment>
<comment type="catalytic activity">
    <reaction evidence="1">
        <text>UTP + NH4(+) + ATP = CTP + ADP + phosphate + 2 H(+)</text>
        <dbReference type="Rhea" id="RHEA:16597"/>
        <dbReference type="ChEBI" id="CHEBI:15378"/>
        <dbReference type="ChEBI" id="CHEBI:28938"/>
        <dbReference type="ChEBI" id="CHEBI:30616"/>
        <dbReference type="ChEBI" id="CHEBI:37563"/>
        <dbReference type="ChEBI" id="CHEBI:43474"/>
        <dbReference type="ChEBI" id="CHEBI:46398"/>
        <dbReference type="ChEBI" id="CHEBI:456216"/>
    </reaction>
</comment>
<comment type="activity regulation">
    <text evidence="1">Allosterically activated by GTP, when glutamine is the substrate; GTP has no effect on the reaction when ammonia is the substrate. The allosteric effector GTP functions by stabilizing the protein conformation that binds the tetrahedral intermediate(s) formed during glutamine hydrolysis. Inhibited by the product CTP, via allosteric rather than competitive inhibition.</text>
</comment>
<comment type="pathway">
    <text evidence="1">Pyrimidine metabolism; CTP biosynthesis via de novo pathway; CTP from UDP: step 2/2.</text>
</comment>
<comment type="subunit">
    <text evidence="1">Homotetramer.</text>
</comment>
<comment type="miscellaneous">
    <text evidence="1">CTPSs have evolved a hybrid strategy for distinguishing between UTP and CTP. The overlapping regions of the product feedback inhibitory and substrate sites recognize a common feature in both compounds, the triphosphate moiety. To differentiate isosteric substrate and product pyrimidine rings, an additional pocket far from the expected kinase/ligase catalytic site, specifically recognizes the cytosine and ribose portions of the product inhibitor.</text>
</comment>
<comment type="similarity">
    <text evidence="1">Belongs to the CTP synthase family.</text>
</comment>
<name>PYRG_CLOP1</name>
<proteinExistence type="inferred from homology"/>
<feature type="chain" id="PRO_0000266096" description="CTP synthase">
    <location>
        <begin position="1"/>
        <end position="535"/>
    </location>
</feature>
<feature type="domain" description="Glutamine amidotransferase type-1" evidence="1">
    <location>
        <begin position="295"/>
        <end position="535"/>
    </location>
</feature>
<feature type="region of interest" description="Amidoligase domain" evidence="1">
    <location>
        <begin position="1"/>
        <end position="270"/>
    </location>
</feature>
<feature type="active site" description="Nucleophile; for glutamine hydrolysis" evidence="1">
    <location>
        <position position="384"/>
    </location>
</feature>
<feature type="active site" evidence="1">
    <location>
        <position position="510"/>
    </location>
</feature>
<feature type="active site" evidence="1">
    <location>
        <position position="512"/>
    </location>
</feature>
<feature type="binding site" evidence="1">
    <location>
        <position position="16"/>
    </location>
    <ligand>
        <name>CTP</name>
        <dbReference type="ChEBI" id="CHEBI:37563"/>
        <note>allosteric inhibitor</note>
    </ligand>
</feature>
<feature type="binding site" evidence="1">
    <location>
        <position position="16"/>
    </location>
    <ligand>
        <name>UTP</name>
        <dbReference type="ChEBI" id="CHEBI:46398"/>
    </ligand>
</feature>
<feature type="binding site" evidence="1">
    <location>
        <begin position="17"/>
        <end position="22"/>
    </location>
    <ligand>
        <name>ATP</name>
        <dbReference type="ChEBI" id="CHEBI:30616"/>
    </ligand>
</feature>
<feature type="binding site" evidence="1">
    <location>
        <position position="57"/>
    </location>
    <ligand>
        <name>L-glutamine</name>
        <dbReference type="ChEBI" id="CHEBI:58359"/>
    </ligand>
</feature>
<feature type="binding site" evidence="1">
    <location>
        <position position="74"/>
    </location>
    <ligand>
        <name>ATP</name>
        <dbReference type="ChEBI" id="CHEBI:30616"/>
    </ligand>
</feature>
<feature type="binding site" evidence="1">
    <location>
        <position position="74"/>
    </location>
    <ligand>
        <name>Mg(2+)</name>
        <dbReference type="ChEBI" id="CHEBI:18420"/>
    </ligand>
</feature>
<feature type="binding site" evidence="1">
    <location>
        <position position="144"/>
    </location>
    <ligand>
        <name>Mg(2+)</name>
        <dbReference type="ChEBI" id="CHEBI:18420"/>
    </ligand>
</feature>
<feature type="binding site" evidence="1">
    <location>
        <begin position="151"/>
        <end position="153"/>
    </location>
    <ligand>
        <name>CTP</name>
        <dbReference type="ChEBI" id="CHEBI:37563"/>
        <note>allosteric inhibitor</note>
    </ligand>
</feature>
<feature type="binding site" evidence="1">
    <location>
        <begin position="191"/>
        <end position="196"/>
    </location>
    <ligand>
        <name>CTP</name>
        <dbReference type="ChEBI" id="CHEBI:37563"/>
        <note>allosteric inhibitor</note>
    </ligand>
</feature>
<feature type="binding site" evidence="1">
    <location>
        <begin position="191"/>
        <end position="196"/>
    </location>
    <ligand>
        <name>UTP</name>
        <dbReference type="ChEBI" id="CHEBI:46398"/>
    </ligand>
</feature>
<feature type="binding site" evidence="1">
    <location>
        <position position="227"/>
    </location>
    <ligand>
        <name>CTP</name>
        <dbReference type="ChEBI" id="CHEBI:37563"/>
        <note>allosteric inhibitor</note>
    </ligand>
</feature>
<feature type="binding site" evidence="1">
    <location>
        <position position="227"/>
    </location>
    <ligand>
        <name>UTP</name>
        <dbReference type="ChEBI" id="CHEBI:46398"/>
    </ligand>
</feature>
<feature type="binding site" evidence="1">
    <location>
        <position position="357"/>
    </location>
    <ligand>
        <name>L-glutamine</name>
        <dbReference type="ChEBI" id="CHEBI:58359"/>
    </ligand>
</feature>
<feature type="binding site" evidence="1">
    <location>
        <begin position="385"/>
        <end position="388"/>
    </location>
    <ligand>
        <name>L-glutamine</name>
        <dbReference type="ChEBI" id="CHEBI:58359"/>
    </ligand>
</feature>
<feature type="binding site" evidence="1">
    <location>
        <position position="408"/>
    </location>
    <ligand>
        <name>L-glutamine</name>
        <dbReference type="ChEBI" id="CHEBI:58359"/>
    </ligand>
</feature>
<feature type="binding site" evidence="1">
    <location>
        <position position="465"/>
    </location>
    <ligand>
        <name>L-glutamine</name>
        <dbReference type="ChEBI" id="CHEBI:58359"/>
    </ligand>
</feature>
<organism>
    <name type="scientific">Clostridium perfringens (strain ATCC 13124 / DSM 756 / JCM 1290 / NCIMB 6125 / NCTC 8237 / Type A)</name>
    <dbReference type="NCBI Taxonomy" id="195103"/>
    <lineage>
        <taxon>Bacteria</taxon>
        <taxon>Bacillati</taxon>
        <taxon>Bacillota</taxon>
        <taxon>Clostridia</taxon>
        <taxon>Eubacteriales</taxon>
        <taxon>Clostridiaceae</taxon>
        <taxon>Clostridium</taxon>
    </lineage>
</organism>
<protein>
    <recommendedName>
        <fullName evidence="1">CTP synthase</fullName>
        <ecNumber evidence="1">6.3.4.2</ecNumber>
    </recommendedName>
    <alternativeName>
        <fullName evidence="1">Cytidine 5'-triphosphate synthase</fullName>
    </alternativeName>
    <alternativeName>
        <fullName evidence="1">Cytidine triphosphate synthetase</fullName>
        <shortName evidence="1">CTP synthetase</shortName>
        <shortName evidence="1">CTPS</shortName>
    </alternativeName>
    <alternativeName>
        <fullName evidence="1">UTP--ammonia ligase</fullName>
    </alternativeName>
</protein>
<reference key="1">
    <citation type="journal article" date="2006" name="Genome Res.">
        <title>Skewed genomic variability in strains of the toxigenic bacterial pathogen, Clostridium perfringens.</title>
        <authorList>
            <person name="Myers G.S.A."/>
            <person name="Rasko D.A."/>
            <person name="Cheung J.K."/>
            <person name="Ravel J."/>
            <person name="Seshadri R."/>
            <person name="DeBoy R.T."/>
            <person name="Ren Q."/>
            <person name="Varga J."/>
            <person name="Awad M.M."/>
            <person name="Brinkac L.M."/>
            <person name="Daugherty S.C."/>
            <person name="Haft D.H."/>
            <person name="Dodson R.J."/>
            <person name="Madupu R."/>
            <person name="Nelson W.C."/>
            <person name="Rosovitz M.J."/>
            <person name="Sullivan S.A."/>
            <person name="Khouri H."/>
            <person name="Dimitrov G.I."/>
            <person name="Watkins K.L."/>
            <person name="Mulligan S."/>
            <person name="Benton J."/>
            <person name="Radune D."/>
            <person name="Fisher D.J."/>
            <person name="Atkins H.S."/>
            <person name="Hiscox T."/>
            <person name="Jost B.H."/>
            <person name="Billington S.J."/>
            <person name="Songer J.G."/>
            <person name="McClane B.A."/>
            <person name="Titball R.W."/>
            <person name="Rood J.I."/>
            <person name="Melville S.B."/>
            <person name="Paulsen I.T."/>
        </authorList>
    </citation>
    <scope>NUCLEOTIDE SEQUENCE [LARGE SCALE GENOMIC DNA]</scope>
    <source>
        <strain>ATCC 13124 / DSM 756 / JCM 1290 / NCIMB 6125 / NCTC 8237 / S 107 / Type A</strain>
    </source>
</reference>
<dbReference type="EC" id="6.3.4.2" evidence="1"/>
<dbReference type="EMBL" id="CP000246">
    <property type="protein sequence ID" value="ABG84508.1"/>
    <property type="molecule type" value="Genomic_DNA"/>
</dbReference>
<dbReference type="RefSeq" id="WP_003452392.1">
    <property type="nucleotide sequence ID" value="NC_008261.1"/>
</dbReference>
<dbReference type="SMR" id="Q0TNA4"/>
<dbReference type="STRING" id="195103.CPF_2472"/>
<dbReference type="PaxDb" id="195103-CPF_2472"/>
<dbReference type="KEGG" id="cpf:CPF_2472"/>
<dbReference type="eggNOG" id="COG0504">
    <property type="taxonomic scope" value="Bacteria"/>
</dbReference>
<dbReference type="HOGENOM" id="CLU_011675_5_0_9"/>
<dbReference type="UniPathway" id="UPA00159">
    <property type="reaction ID" value="UER00277"/>
</dbReference>
<dbReference type="Proteomes" id="UP000001823">
    <property type="component" value="Chromosome"/>
</dbReference>
<dbReference type="GO" id="GO:0005829">
    <property type="term" value="C:cytosol"/>
    <property type="evidence" value="ECO:0007669"/>
    <property type="project" value="TreeGrafter"/>
</dbReference>
<dbReference type="GO" id="GO:0005524">
    <property type="term" value="F:ATP binding"/>
    <property type="evidence" value="ECO:0007669"/>
    <property type="project" value="UniProtKB-KW"/>
</dbReference>
<dbReference type="GO" id="GO:0003883">
    <property type="term" value="F:CTP synthase activity"/>
    <property type="evidence" value="ECO:0007669"/>
    <property type="project" value="UniProtKB-UniRule"/>
</dbReference>
<dbReference type="GO" id="GO:0004359">
    <property type="term" value="F:glutaminase activity"/>
    <property type="evidence" value="ECO:0007669"/>
    <property type="project" value="RHEA"/>
</dbReference>
<dbReference type="GO" id="GO:0042802">
    <property type="term" value="F:identical protein binding"/>
    <property type="evidence" value="ECO:0007669"/>
    <property type="project" value="TreeGrafter"/>
</dbReference>
<dbReference type="GO" id="GO:0046872">
    <property type="term" value="F:metal ion binding"/>
    <property type="evidence" value="ECO:0007669"/>
    <property type="project" value="UniProtKB-KW"/>
</dbReference>
<dbReference type="GO" id="GO:0044210">
    <property type="term" value="P:'de novo' CTP biosynthetic process"/>
    <property type="evidence" value="ECO:0007669"/>
    <property type="project" value="UniProtKB-UniRule"/>
</dbReference>
<dbReference type="GO" id="GO:0019856">
    <property type="term" value="P:pyrimidine nucleobase biosynthetic process"/>
    <property type="evidence" value="ECO:0007669"/>
    <property type="project" value="TreeGrafter"/>
</dbReference>
<dbReference type="CDD" id="cd03113">
    <property type="entry name" value="CTPS_N"/>
    <property type="match status" value="1"/>
</dbReference>
<dbReference type="CDD" id="cd01746">
    <property type="entry name" value="GATase1_CTP_Synthase"/>
    <property type="match status" value="1"/>
</dbReference>
<dbReference type="FunFam" id="3.40.50.300:FF:000009">
    <property type="entry name" value="CTP synthase"/>
    <property type="match status" value="1"/>
</dbReference>
<dbReference type="FunFam" id="3.40.50.880:FF:000002">
    <property type="entry name" value="CTP synthase"/>
    <property type="match status" value="1"/>
</dbReference>
<dbReference type="Gene3D" id="3.40.50.880">
    <property type="match status" value="1"/>
</dbReference>
<dbReference type="Gene3D" id="3.40.50.300">
    <property type="entry name" value="P-loop containing nucleotide triphosphate hydrolases"/>
    <property type="match status" value="1"/>
</dbReference>
<dbReference type="HAMAP" id="MF_01227">
    <property type="entry name" value="PyrG"/>
    <property type="match status" value="1"/>
</dbReference>
<dbReference type="InterPro" id="IPR029062">
    <property type="entry name" value="Class_I_gatase-like"/>
</dbReference>
<dbReference type="InterPro" id="IPR004468">
    <property type="entry name" value="CTP_synthase"/>
</dbReference>
<dbReference type="InterPro" id="IPR017456">
    <property type="entry name" value="CTP_synthase_N"/>
</dbReference>
<dbReference type="InterPro" id="IPR017926">
    <property type="entry name" value="GATASE"/>
</dbReference>
<dbReference type="InterPro" id="IPR033828">
    <property type="entry name" value="GATase1_CTP_Synthase"/>
</dbReference>
<dbReference type="InterPro" id="IPR027417">
    <property type="entry name" value="P-loop_NTPase"/>
</dbReference>
<dbReference type="NCBIfam" id="NF003792">
    <property type="entry name" value="PRK05380.1"/>
    <property type="match status" value="1"/>
</dbReference>
<dbReference type="NCBIfam" id="TIGR00337">
    <property type="entry name" value="PyrG"/>
    <property type="match status" value="1"/>
</dbReference>
<dbReference type="PANTHER" id="PTHR11550">
    <property type="entry name" value="CTP SYNTHASE"/>
    <property type="match status" value="1"/>
</dbReference>
<dbReference type="PANTHER" id="PTHR11550:SF0">
    <property type="entry name" value="CTP SYNTHASE-RELATED"/>
    <property type="match status" value="1"/>
</dbReference>
<dbReference type="Pfam" id="PF06418">
    <property type="entry name" value="CTP_synth_N"/>
    <property type="match status" value="1"/>
</dbReference>
<dbReference type="Pfam" id="PF00117">
    <property type="entry name" value="GATase"/>
    <property type="match status" value="1"/>
</dbReference>
<dbReference type="SUPFAM" id="SSF52317">
    <property type="entry name" value="Class I glutamine amidotransferase-like"/>
    <property type="match status" value="1"/>
</dbReference>
<dbReference type="SUPFAM" id="SSF52540">
    <property type="entry name" value="P-loop containing nucleoside triphosphate hydrolases"/>
    <property type="match status" value="1"/>
</dbReference>
<dbReference type="PROSITE" id="PS51273">
    <property type="entry name" value="GATASE_TYPE_1"/>
    <property type="match status" value="1"/>
</dbReference>
<accession>Q0TNA4</accession>